<protein>
    <recommendedName>
        <fullName evidence="1">Inorganic pyrophosphatase</fullName>
        <ecNumber evidence="1">3.6.1.1</ecNumber>
    </recommendedName>
    <alternativeName>
        <fullName evidence="1">Pyrophosphate phospho-hydrolase</fullName>
        <shortName evidence="1">PPase</shortName>
    </alternativeName>
</protein>
<gene>
    <name evidence="1" type="primary">ppa</name>
    <name type="ordered locus">CE2546</name>
</gene>
<feature type="chain" id="PRO_0000137493" description="Inorganic pyrophosphatase">
    <location>
        <begin position="1"/>
        <end position="158"/>
    </location>
</feature>
<feature type="active site" description="Proton acceptor" evidence="1">
    <location>
        <position position="89"/>
    </location>
</feature>
<feature type="binding site" evidence="1">
    <location>
        <position position="8"/>
    </location>
    <ligand>
        <name>Mg(2+)</name>
        <dbReference type="ChEBI" id="CHEBI:18420"/>
        <label>2</label>
    </ligand>
</feature>
<feature type="binding site" evidence="1">
    <location>
        <position position="16"/>
    </location>
    <ligand>
        <name>substrate</name>
    </ligand>
</feature>
<feature type="binding site" evidence="1">
    <location>
        <position position="30"/>
    </location>
    <ligand>
        <name>substrate</name>
    </ligand>
</feature>
<feature type="binding site" evidence="1">
    <location>
        <position position="42"/>
    </location>
    <ligand>
        <name>substrate</name>
    </ligand>
</feature>
<feature type="binding site" evidence="1">
    <location>
        <position position="52"/>
    </location>
    <ligand>
        <name>Mg(2+)</name>
        <dbReference type="ChEBI" id="CHEBI:18420"/>
        <label>1</label>
    </ligand>
</feature>
<feature type="binding site" evidence="1">
    <location>
        <position position="57"/>
    </location>
    <ligand>
        <name>Mg(2+)</name>
        <dbReference type="ChEBI" id="CHEBI:18420"/>
        <label>1</label>
    </ligand>
</feature>
<feature type="binding site" evidence="1">
    <location>
        <position position="57"/>
    </location>
    <ligand>
        <name>Mg(2+)</name>
        <dbReference type="ChEBI" id="CHEBI:18420"/>
        <label>2</label>
    </ligand>
</feature>
<feature type="binding site" evidence="1">
    <location>
        <position position="84"/>
    </location>
    <ligand>
        <name>Mg(2+)</name>
        <dbReference type="ChEBI" id="CHEBI:18420"/>
        <label>3</label>
    </ligand>
</feature>
<feature type="binding site" evidence="1">
    <location>
        <position position="89"/>
    </location>
    <ligand>
        <name>Mg(2+)</name>
        <dbReference type="ChEBI" id="CHEBI:18420"/>
        <label>1</label>
    </ligand>
</feature>
<feature type="binding site" evidence="1">
    <location>
        <position position="89"/>
    </location>
    <ligand>
        <name>Mg(2+)</name>
        <dbReference type="ChEBI" id="CHEBI:18420"/>
        <label>3</label>
    </ligand>
</feature>
<feature type="binding site" evidence="1">
    <location>
        <position position="125"/>
    </location>
    <ligand>
        <name>substrate</name>
    </ligand>
</feature>
<dbReference type="EC" id="3.6.1.1" evidence="1"/>
<dbReference type="EMBL" id="BA000035">
    <property type="protein sequence ID" value="BAC19356.1"/>
    <property type="molecule type" value="Genomic_DNA"/>
</dbReference>
<dbReference type="RefSeq" id="WP_006769089.1">
    <property type="nucleotide sequence ID" value="NC_004369.1"/>
</dbReference>
<dbReference type="SMR" id="Q8FMF8"/>
<dbReference type="STRING" id="196164.gene:10742993"/>
<dbReference type="KEGG" id="cef:CE2546"/>
<dbReference type="eggNOG" id="COG0221">
    <property type="taxonomic scope" value="Bacteria"/>
</dbReference>
<dbReference type="HOGENOM" id="CLU_073198_1_1_11"/>
<dbReference type="OrthoDB" id="5187599at2"/>
<dbReference type="Proteomes" id="UP000001409">
    <property type="component" value="Chromosome"/>
</dbReference>
<dbReference type="GO" id="GO:0005737">
    <property type="term" value="C:cytoplasm"/>
    <property type="evidence" value="ECO:0007669"/>
    <property type="project" value="UniProtKB-SubCell"/>
</dbReference>
<dbReference type="GO" id="GO:0004427">
    <property type="term" value="F:inorganic diphosphate phosphatase activity"/>
    <property type="evidence" value="ECO:0007669"/>
    <property type="project" value="UniProtKB-UniRule"/>
</dbReference>
<dbReference type="GO" id="GO:0000287">
    <property type="term" value="F:magnesium ion binding"/>
    <property type="evidence" value="ECO:0007669"/>
    <property type="project" value="UniProtKB-UniRule"/>
</dbReference>
<dbReference type="GO" id="GO:0006796">
    <property type="term" value="P:phosphate-containing compound metabolic process"/>
    <property type="evidence" value="ECO:0007669"/>
    <property type="project" value="InterPro"/>
</dbReference>
<dbReference type="CDD" id="cd00412">
    <property type="entry name" value="pyrophosphatase"/>
    <property type="match status" value="1"/>
</dbReference>
<dbReference type="FunFam" id="3.90.80.10:FF:000003">
    <property type="entry name" value="Inorganic pyrophosphatase"/>
    <property type="match status" value="1"/>
</dbReference>
<dbReference type="Gene3D" id="3.90.80.10">
    <property type="entry name" value="Inorganic pyrophosphatase"/>
    <property type="match status" value="1"/>
</dbReference>
<dbReference type="HAMAP" id="MF_00209">
    <property type="entry name" value="Inorganic_PPase"/>
    <property type="match status" value="1"/>
</dbReference>
<dbReference type="InterPro" id="IPR008162">
    <property type="entry name" value="Pyrophosphatase"/>
</dbReference>
<dbReference type="InterPro" id="IPR036649">
    <property type="entry name" value="Pyrophosphatase_sf"/>
</dbReference>
<dbReference type="PANTHER" id="PTHR10286">
    <property type="entry name" value="INORGANIC PYROPHOSPHATASE"/>
    <property type="match status" value="1"/>
</dbReference>
<dbReference type="Pfam" id="PF00719">
    <property type="entry name" value="Pyrophosphatase"/>
    <property type="match status" value="1"/>
</dbReference>
<dbReference type="SUPFAM" id="SSF50324">
    <property type="entry name" value="Inorganic pyrophosphatase"/>
    <property type="match status" value="1"/>
</dbReference>
<dbReference type="PROSITE" id="PS00387">
    <property type="entry name" value="PPASE"/>
    <property type="match status" value="1"/>
</dbReference>
<keyword id="KW-0963">Cytoplasm</keyword>
<keyword id="KW-0378">Hydrolase</keyword>
<keyword id="KW-0460">Magnesium</keyword>
<keyword id="KW-0479">Metal-binding</keyword>
<keyword id="KW-1185">Reference proteome</keyword>
<accession>Q8FMF8</accession>
<comment type="function">
    <text evidence="1">Catalyzes the hydrolysis of inorganic pyrophosphate (PPi) forming two phosphate ions.</text>
</comment>
<comment type="catalytic activity">
    <reaction evidence="1">
        <text>diphosphate + H2O = 2 phosphate + H(+)</text>
        <dbReference type="Rhea" id="RHEA:24576"/>
        <dbReference type="ChEBI" id="CHEBI:15377"/>
        <dbReference type="ChEBI" id="CHEBI:15378"/>
        <dbReference type="ChEBI" id="CHEBI:33019"/>
        <dbReference type="ChEBI" id="CHEBI:43474"/>
        <dbReference type="EC" id="3.6.1.1"/>
    </reaction>
</comment>
<comment type="cofactor">
    <cofactor evidence="1">
        <name>Mg(2+)</name>
        <dbReference type="ChEBI" id="CHEBI:18420"/>
    </cofactor>
</comment>
<comment type="subunit">
    <text evidence="1">Homohexamer.</text>
</comment>
<comment type="subcellular location">
    <subcellularLocation>
        <location evidence="1">Cytoplasm</location>
    </subcellularLocation>
</comment>
<comment type="similarity">
    <text evidence="1">Belongs to the PPase family.</text>
</comment>
<evidence type="ECO:0000255" key="1">
    <source>
        <dbReference type="HAMAP-Rule" id="MF_00209"/>
    </source>
</evidence>
<name>IPYR_COREF</name>
<organism>
    <name type="scientific">Corynebacterium efficiens (strain DSM 44549 / YS-314 / AJ 12310 / JCM 11189 / NBRC 100395)</name>
    <dbReference type="NCBI Taxonomy" id="196164"/>
    <lineage>
        <taxon>Bacteria</taxon>
        <taxon>Bacillati</taxon>
        <taxon>Actinomycetota</taxon>
        <taxon>Actinomycetes</taxon>
        <taxon>Mycobacteriales</taxon>
        <taxon>Corynebacteriaceae</taxon>
        <taxon>Corynebacterium</taxon>
    </lineage>
</organism>
<proteinExistence type="inferred from homology"/>
<sequence>MSVEVTVEIPKGSRNKYEIDHETGKVYLDRYLFTPMAYPLDYGFIDHTLGEDGDPMDALVILPESVFPNVIVKSRVIGVFKMTDEAGGDDKLLAVLDDPRYDHIQDISDVSDFLKDEIEHFFVHYKDLEKGKHVDGSGWGDKAEAEQILADSIERYKA</sequence>
<reference key="1">
    <citation type="journal article" date="2003" name="Genome Res.">
        <title>Comparative complete genome sequence analysis of the amino acid replacements responsible for the thermostability of Corynebacterium efficiens.</title>
        <authorList>
            <person name="Nishio Y."/>
            <person name="Nakamura Y."/>
            <person name="Kawarabayasi Y."/>
            <person name="Usuda Y."/>
            <person name="Kimura E."/>
            <person name="Sugimoto S."/>
            <person name="Matsui K."/>
            <person name="Yamagishi A."/>
            <person name="Kikuchi H."/>
            <person name="Ikeo K."/>
            <person name="Gojobori T."/>
        </authorList>
    </citation>
    <scope>NUCLEOTIDE SEQUENCE [LARGE SCALE GENOMIC DNA]</scope>
    <source>
        <strain>DSM 44549 / YS-314 / AJ 12310 / JCM 11189 / NBRC 100395</strain>
    </source>
</reference>